<accession>P80554</accession>
<proteinExistence type="evidence at protein level"/>
<organism>
    <name type="scientific">Narcissus pseudonarcissus</name>
    <name type="common">Daffodil</name>
    <dbReference type="NCBI Taxonomy" id="39639"/>
    <lineage>
        <taxon>Eukaryota</taxon>
        <taxon>Viridiplantae</taxon>
        <taxon>Streptophyta</taxon>
        <taxon>Embryophyta</taxon>
        <taxon>Tracheophyta</taxon>
        <taxon>Spermatophyta</taxon>
        <taxon>Magnoliopsida</taxon>
        <taxon>Liliopsida</taxon>
        <taxon>Asparagales</taxon>
        <taxon>Amaryllidaceae</taxon>
        <taxon>Amaryllidoideae</taxon>
        <taxon>Narcissus</taxon>
    </lineage>
</organism>
<feature type="chain" id="PRO_0000065023" description="Bulb protein">
    <location>
        <begin position="1"/>
        <end position="20" status="greater than"/>
    </location>
</feature>
<feature type="region of interest" description="Disordered" evidence="1">
    <location>
        <begin position="1"/>
        <end position="20"/>
    </location>
</feature>
<feature type="unsure residue" description="P or N">
    <location>
        <position position="2"/>
    </location>
</feature>
<feature type="non-terminal residue">
    <location>
        <position position="20"/>
    </location>
</feature>
<evidence type="ECO:0000256" key="1">
    <source>
        <dbReference type="SAM" id="MobiDB-lite"/>
    </source>
</evidence>
<protein>
    <recommendedName>
        <fullName>Bulb protein</fullName>
    </recommendedName>
</protein>
<sequence length="20" mass="2080">APDVHTRXTQNGLPPGXLPS</sequence>
<reference key="1">
    <citation type="submission" date="1996-02" db="UniProtKB">
        <authorList>
            <person name="Partis M.D."/>
            <person name="Barker P."/>
            <person name="Thomas B."/>
        </authorList>
    </citation>
    <scope>PROTEIN SEQUENCE</scope>
    <source>
        <strain>cv. Golden Harvest</strain>
        <tissue>Bulb</tissue>
    </source>
</reference>
<name>BULB_NARPS</name>
<keyword id="KW-0903">Direct protein sequencing</keyword>